<organism>
    <name type="scientific">Conus textile</name>
    <name type="common">Cloth-of-gold cone</name>
    <dbReference type="NCBI Taxonomy" id="6494"/>
    <lineage>
        <taxon>Eukaryota</taxon>
        <taxon>Metazoa</taxon>
        <taxon>Spiralia</taxon>
        <taxon>Lophotrochozoa</taxon>
        <taxon>Mollusca</taxon>
        <taxon>Gastropoda</taxon>
        <taxon>Caenogastropoda</taxon>
        <taxon>Neogastropoda</taxon>
        <taxon>Conoidea</taxon>
        <taxon>Conidae</taxon>
        <taxon>Conus</taxon>
        <taxon>Cylinder</taxon>
    </lineage>
</organism>
<name>CT54_CONTE</name>
<accession>Q9BPF9</accession>
<protein>
    <recommendedName>
        <fullName evidence="5">Conotoxin TxMRCL-04</fullName>
    </recommendedName>
</protein>
<reference key="1">
    <citation type="journal article" date="2001" name="Mol. Biol. Evol.">
        <title>Mechanisms for evolving hypervariability: the case of conopeptides.</title>
        <authorList>
            <person name="Conticello S.G."/>
            <person name="Gilad Y."/>
            <person name="Avidan N."/>
            <person name="Ben-Asher E."/>
            <person name="Levy Z."/>
            <person name="Fainzilber M."/>
        </authorList>
    </citation>
    <scope>NUCLEOTIDE SEQUENCE [MRNA]</scope>
    <source>
        <tissue>Venom duct</tissue>
    </source>
</reference>
<dbReference type="EMBL" id="AF214970">
    <property type="protein sequence ID" value="AAG60398.1"/>
    <property type="molecule type" value="mRNA"/>
</dbReference>
<dbReference type="ConoServer" id="657">
    <property type="toxin name" value="TxMRCL-04 precursor"/>
</dbReference>
<dbReference type="GO" id="GO:0005576">
    <property type="term" value="C:extracellular region"/>
    <property type="evidence" value="ECO:0007669"/>
    <property type="project" value="UniProtKB-SubCell"/>
</dbReference>
<dbReference type="GO" id="GO:0090729">
    <property type="term" value="F:toxin activity"/>
    <property type="evidence" value="ECO:0007669"/>
    <property type="project" value="UniProtKB-KW"/>
</dbReference>
<dbReference type="InterPro" id="IPR031565">
    <property type="entry name" value="T-conotoxin"/>
</dbReference>
<dbReference type="Pfam" id="PF16981">
    <property type="entry name" value="Chi-conotoxin"/>
    <property type="match status" value="1"/>
</dbReference>
<sequence length="61" mass="6841">MRCLPVFVILLLLIASTPSVDAQLKTKDDMSLASFHDNVKRILQIRTTEECCPFIVGCCSR</sequence>
<proteinExistence type="inferred from homology"/>
<evidence type="ECO:0000250" key="1"/>
<evidence type="ECO:0000255" key="2"/>
<evidence type="ECO:0000305" key="3"/>
<evidence type="ECO:0000305" key="4">
    <source>
    </source>
</evidence>
<evidence type="ECO:0000312" key="5">
    <source>
        <dbReference type="EMBL" id="AAG60398.1"/>
    </source>
</evidence>
<feature type="signal peptide" evidence="2">
    <location>
        <begin position="1"/>
        <end position="22"/>
    </location>
</feature>
<feature type="propeptide" id="PRO_0000404958" evidence="1">
    <location>
        <begin position="23"/>
        <end position="46"/>
    </location>
</feature>
<feature type="peptide" id="PRO_0000404959" description="Conotoxin TxMRCL-04">
    <location>
        <begin position="47"/>
        <end position="60"/>
    </location>
</feature>
<comment type="subcellular location">
    <subcellularLocation>
        <location evidence="4">Secreted</location>
    </subcellularLocation>
</comment>
<comment type="tissue specificity">
    <text evidence="4">Expressed by the venom duct.</text>
</comment>
<comment type="domain">
    <text evidence="3">The cysteine framework is V (CC-CC).</text>
</comment>
<comment type="PTM">
    <text evidence="3">Contains 2 disulfide bonds that can be either 'C1-C3, C2-C4' or 'C1-C4, C2-C3', since these disulfide connectivities have been observed for conotoxins with cysteine framework V (for examples, see AC P0DQQ7 and AC P81755).</text>
</comment>
<comment type="similarity">
    <text evidence="3">Belongs to the conotoxin T superfamily.</text>
</comment>
<keyword id="KW-1015">Disulfide bond</keyword>
<keyword id="KW-0528">Neurotoxin</keyword>
<keyword id="KW-0964">Secreted</keyword>
<keyword id="KW-0732">Signal</keyword>
<keyword id="KW-0800">Toxin</keyword>